<name>ARY2_CHICK</name>
<accession>P13914</accession>
<feature type="chain" id="PRO_0000107902" description="Arylamine N-acetyltransferase, pineal gland isozyme NAT-3">
    <location>
        <begin position="1"/>
        <end position="290"/>
    </location>
</feature>
<feature type="active site" description="Acyl-thioester intermediate" evidence="1">
    <location>
        <position position="68"/>
    </location>
</feature>
<feature type="active site" evidence="1">
    <location>
        <position position="107"/>
    </location>
</feature>
<feature type="active site" evidence="1">
    <location>
        <position position="122"/>
    </location>
</feature>
<sequence>MDIKEYFARISYGGSYEKPDLETLTEIFQHHIQAVPFENLSIHCGETIELDLAATYDKIVRKKRGGWCMENNHLLSWALKTLGYNVTLLGAKVYIPEHDAYADDIDHLLLKVVLHDKSYIVDGGFGMAYQLWQPMELISGKDQPQTPGIFRFVEENGTWYLEKVKRKQYVPNHSDSAPHNVDKEVCRRVYLFTLQPRDIEEFRARNLHLQTAPDSLFVTKSICSLQTPDGVRALVGWKLTEIKYNYKDNMDLVEIRILADEEMEKTLKEKFNITLDKKFVPINTSRLSLF</sequence>
<keyword id="KW-0012">Acyltransferase</keyword>
<keyword id="KW-1185">Reference proteome</keyword>
<keyword id="KW-0808">Transferase</keyword>
<dbReference type="EC" id="2.3.1.5" evidence="2"/>
<dbReference type="EC" id="2.3.1.118" evidence="2"/>
<dbReference type="EMBL" id="X17480">
    <property type="protein sequence ID" value="CAA35515.1"/>
    <property type="molecule type" value="mRNA"/>
</dbReference>
<dbReference type="PIR" id="S06652">
    <property type="entry name" value="XYCHY3"/>
</dbReference>
<dbReference type="RefSeq" id="NP_001004373.1">
    <property type="nucleotide sequence ID" value="NM_001004373.2"/>
</dbReference>
<dbReference type="RefSeq" id="XP_015148014.1">
    <property type="nucleotide sequence ID" value="XM_015292528.4"/>
</dbReference>
<dbReference type="RefSeq" id="XP_015148015.1">
    <property type="nucleotide sequence ID" value="XM_015292529.4"/>
</dbReference>
<dbReference type="RefSeq" id="XP_025009951.1">
    <property type="nucleotide sequence ID" value="XM_025154183.3"/>
</dbReference>
<dbReference type="RefSeq" id="XP_046755442.1">
    <property type="nucleotide sequence ID" value="XM_046899486.1"/>
</dbReference>
<dbReference type="RefSeq" id="XP_046781525.1">
    <property type="nucleotide sequence ID" value="XM_046925569.1"/>
</dbReference>
<dbReference type="RefSeq" id="XP_046781526.1">
    <property type="nucleotide sequence ID" value="XM_046925570.1"/>
</dbReference>
<dbReference type="RefSeq" id="XP_046781527.1">
    <property type="nucleotide sequence ID" value="XM_046925571.1"/>
</dbReference>
<dbReference type="SMR" id="P13914"/>
<dbReference type="FunCoup" id="P13914">
    <property type="interactions" value="27"/>
</dbReference>
<dbReference type="STRING" id="9031.ENSGALP00000066462"/>
<dbReference type="PaxDb" id="9031-ENSGALP00000008779"/>
<dbReference type="Ensembl" id="ENSGALT00010017737.1">
    <property type="protein sequence ID" value="ENSGALP00010009807.1"/>
    <property type="gene ID" value="ENSGALG00010007436.1"/>
</dbReference>
<dbReference type="GeneID" id="415809"/>
<dbReference type="KEGG" id="gga:415809"/>
<dbReference type="CTD" id="415809"/>
<dbReference type="VEuPathDB" id="HostDB:geneid_415809"/>
<dbReference type="eggNOG" id="ENOG502RD0D">
    <property type="taxonomic scope" value="Eukaryota"/>
</dbReference>
<dbReference type="GeneTree" id="ENSGT00390000012054"/>
<dbReference type="HOGENOM" id="CLU_049918_3_0_1"/>
<dbReference type="InParanoid" id="P13914"/>
<dbReference type="OrthoDB" id="10260017at2759"/>
<dbReference type="PhylomeDB" id="P13914"/>
<dbReference type="TreeFam" id="TF106311"/>
<dbReference type="Reactome" id="R-GGA-156582">
    <property type="pathway name" value="Acetylation"/>
</dbReference>
<dbReference type="Reactome" id="R-GGA-9753281">
    <property type="pathway name" value="Paracetamol ADME"/>
</dbReference>
<dbReference type="PRO" id="PR:P13914"/>
<dbReference type="Proteomes" id="UP000000539">
    <property type="component" value="Chromosome 11"/>
</dbReference>
<dbReference type="Bgee" id="ENSGALG00000005473">
    <property type="expression patterns" value="Expressed in granulocyte and 11 other cell types or tissues"/>
</dbReference>
<dbReference type="GO" id="GO:0004060">
    <property type="term" value="F:arylamine N-acetyltransferase activity"/>
    <property type="evidence" value="ECO:0000318"/>
    <property type="project" value="GO_Central"/>
</dbReference>
<dbReference type="GO" id="GO:0046990">
    <property type="term" value="F:N-hydroxyarylamine O-acetyltransferase activity"/>
    <property type="evidence" value="ECO:0007669"/>
    <property type="project" value="RHEA"/>
</dbReference>
<dbReference type="FunFam" id="3.30.2140.20:FF:000001">
    <property type="entry name" value="Arylamine N-acetyltransferase 1"/>
    <property type="match status" value="1"/>
</dbReference>
<dbReference type="Gene3D" id="3.30.2140.20">
    <property type="match status" value="1"/>
</dbReference>
<dbReference type="InterPro" id="IPR001447">
    <property type="entry name" value="Arylamine_N-AcTrfase"/>
</dbReference>
<dbReference type="InterPro" id="IPR053710">
    <property type="entry name" value="Arylamine_NAT_domain_sf"/>
</dbReference>
<dbReference type="InterPro" id="IPR038765">
    <property type="entry name" value="Papain-like_cys_pep_sf"/>
</dbReference>
<dbReference type="PANTHER" id="PTHR11786:SF8">
    <property type="entry name" value="ARYLAMINE N-ACETYLTRANSFERASE 1"/>
    <property type="match status" value="1"/>
</dbReference>
<dbReference type="PANTHER" id="PTHR11786">
    <property type="entry name" value="N-HYDROXYARYLAMINE O-ACETYLTRANSFERASE"/>
    <property type="match status" value="1"/>
</dbReference>
<dbReference type="Pfam" id="PF00797">
    <property type="entry name" value="Acetyltransf_2"/>
    <property type="match status" value="1"/>
</dbReference>
<dbReference type="PRINTS" id="PR01543">
    <property type="entry name" value="ANATRNSFRASE"/>
</dbReference>
<dbReference type="SUPFAM" id="SSF54001">
    <property type="entry name" value="Cysteine proteinases"/>
    <property type="match status" value="1"/>
</dbReference>
<comment type="function">
    <text evidence="2">Catalyzes the N- or O-acetylation of various arylamine and heterocyclic amine substrates, and participates in the detoxification of a plethora of hydrazine and arylamine drugs.</text>
</comment>
<comment type="catalytic activity">
    <reaction evidence="2">
        <text>an arylamine + acetyl-CoA = an N-acetylarylamine + CoA</text>
        <dbReference type="Rhea" id="RHEA:16613"/>
        <dbReference type="ChEBI" id="CHEBI:13790"/>
        <dbReference type="ChEBI" id="CHEBI:50471"/>
        <dbReference type="ChEBI" id="CHEBI:57287"/>
        <dbReference type="ChEBI" id="CHEBI:57288"/>
        <dbReference type="EC" id="2.3.1.5"/>
    </reaction>
</comment>
<comment type="catalytic activity">
    <reaction evidence="2">
        <text>an N-hydroxyarylamine + acetyl-CoA = an N-acetoxyarylamine + CoA</text>
        <dbReference type="Rhea" id="RHEA:20277"/>
        <dbReference type="ChEBI" id="CHEBI:13792"/>
        <dbReference type="ChEBI" id="CHEBI:21494"/>
        <dbReference type="ChEBI" id="CHEBI:57287"/>
        <dbReference type="ChEBI" id="CHEBI:57288"/>
        <dbReference type="EC" id="2.3.1.118"/>
    </reaction>
</comment>
<comment type="similarity">
    <text evidence="3">Belongs to the arylamine N-acetyltransferase family.</text>
</comment>
<organism>
    <name type="scientific">Gallus gallus</name>
    <name type="common">Chicken</name>
    <dbReference type="NCBI Taxonomy" id="9031"/>
    <lineage>
        <taxon>Eukaryota</taxon>
        <taxon>Metazoa</taxon>
        <taxon>Chordata</taxon>
        <taxon>Craniata</taxon>
        <taxon>Vertebrata</taxon>
        <taxon>Euteleostomi</taxon>
        <taxon>Archelosauria</taxon>
        <taxon>Archosauria</taxon>
        <taxon>Dinosauria</taxon>
        <taxon>Saurischia</taxon>
        <taxon>Theropoda</taxon>
        <taxon>Coelurosauria</taxon>
        <taxon>Aves</taxon>
        <taxon>Neognathae</taxon>
        <taxon>Galloanserae</taxon>
        <taxon>Galliformes</taxon>
        <taxon>Phasianidae</taxon>
        <taxon>Phasianinae</taxon>
        <taxon>Gallus</taxon>
    </lineage>
</organism>
<protein>
    <recommendedName>
        <fullName>Arylamine N-acetyltransferase, pineal gland isozyme NAT-3</fullName>
        <shortName>Arylamine acetylase</shortName>
        <ecNumber evidence="2">2.3.1.5</ecNumber>
    </recommendedName>
    <alternativeName>
        <fullName>N-hydroxyarylamine O-acetyltransferase</fullName>
        <ecNumber evidence="2">2.3.1.118</ecNumber>
    </alternativeName>
</protein>
<evidence type="ECO:0000250" key="1"/>
<evidence type="ECO:0000250" key="2">
    <source>
        <dbReference type="UniProtKB" id="P11245"/>
    </source>
</evidence>
<evidence type="ECO:0000305" key="3"/>
<proteinExistence type="evidence at transcript level"/>
<reference key="1">
    <citation type="journal article" date="1989" name="Eur. J. Biochem.">
        <title>Two arylamine N-acetyltransferases from chicken pineal gland as identified by cDNA cloning.</title>
        <authorList>
            <person name="Ohtomi M."/>
            <person name="Sasaki M."/>
            <person name="Deguchi T."/>
        </authorList>
    </citation>
    <scope>NUCLEOTIDE SEQUENCE [MRNA]</scope>
    <source>
        <strain>White leghorn</strain>
        <tissue>Pineal gland</tissue>
    </source>
</reference>